<keyword id="KW-0963">Cytoplasm</keyword>
<keyword id="KW-0324">Glycolysis</keyword>
<keyword id="KW-0456">Lyase</keyword>
<keyword id="KW-0460">Magnesium</keyword>
<keyword id="KW-0479">Metal-binding</keyword>
<keyword id="KW-0964">Secreted</keyword>
<protein>
    <recommendedName>
        <fullName evidence="1">Enolase</fullName>
        <ecNumber evidence="1">4.2.1.11</ecNumber>
    </recommendedName>
    <alternativeName>
        <fullName evidence="1">2-phospho-D-glycerate hydro-lyase</fullName>
    </alternativeName>
    <alternativeName>
        <fullName evidence="1">2-phosphoglycerate dehydratase</fullName>
    </alternativeName>
</protein>
<accession>B7HED2</accession>
<feature type="chain" id="PRO_1000119565" description="Enolase">
    <location>
        <begin position="1"/>
        <end position="431"/>
    </location>
</feature>
<feature type="active site" description="Proton donor" evidence="1">
    <location>
        <position position="205"/>
    </location>
</feature>
<feature type="active site" description="Proton acceptor" evidence="1">
    <location>
        <position position="340"/>
    </location>
</feature>
<feature type="binding site" evidence="1">
    <location>
        <position position="163"/>
    </location>
    <ligand>
        <name>(2R)-2-phosphoglycerate</name>
        <dbReference type="ChEBI" id="CHEBI:58289"/>
    </ligand>
</feature>
<feature type="binding site" evidence="1">
    <location>
        <position position="242"/>
    </location>
    <ligand>
        <name>Mg(2+)</name>
        <dbReference type="ChEBI" id="CHEBI:18420"/>
    </ligand>
</feature>
<feature type="binding site" evidence="1">
    <location>
        <position position="288"/>
    </location>
    <ligand>
        <name>Mg(2+)</name>
        <dbReference type="ChEBI" id="CHEBI:18420"/>
    </ligand>
</feature>
<feature type="binding site" evidence="1">
    <location>
        <position position="315"/>
    </location>
    <ligand>
        <name>Mg(2+)</name>
        <dbReference type="ChEBI" id="CHEBI:18420"/>
    </ligand>
</feature>
<feature type="binding site" evidence="1">
    <location>
        <position position="340"/>
    </location>
    <ligand>
        <name>(2R)-2-phosphoglycerate</name>
        <dbReference type="ChEBI" id="CHEBI:58289"/>
    </ligand>
</feature>
<feature type="binding site" evidence="1">
    <location>
        <position position="369"/>
    </location>
    <ligand>
        <name>(2R)-2-phosphoglycerate</name>
        <dbReference type="ChEBI" id="CHEBI:58289"/>
    </ligand>
</feature>
<feature type="binding site" evidence="1">
    <location>
        <position position="370"/>
    </location>
    <ligand>
        <name>(2R)-2-phosphoglycerate</name>
        <dbReference type="ChEBI" id="CHEBI:58289"/>
    </ligand>
</feature>
<feature type="binding site" evidence="1">
    <location>
        <position position="391"/>
    </location>
    <ligand>
        <name>(2R)-2-phosphoglycerate</name>
        <dbReference type="ChEBI" id="CHEBI:58289"/>
    </ligand>
</feature>
<organism>
    <name type="scientific">Bacillus cereus (strain B4264)</name>
    <dbReference type="NCBI Taxonomy" id="405532"/>
    <lineage>
        <taxon>Bacteria</taxon>
        <taxon>Bacillati</taxon>
        <taxon>Bacillota</taxon>
        <taxon>Bacilli</taxon>
        <taxon>Bacillales</taxon>
        <taxon>Bacillaceae</taxon>
        <taxon>Bacillus</taxon>
        <taxon>Bacillus cereus group</taxon>
    </lineage>
</organism>
<dbReference type="EC" id="4.2.1.11" evidence="1"/>
<dbReference type="EMBL" id="CP001176">
    <property type="protein sequence ID" value="ACK61987.1"/>
    <property type="molecule type" value="Genomic_DNA"/>
</dbReference>
<dbReference type="RefSeq" id="WP_000103955.1">
    <property type="nucleotide sequence ID" value="NC_011725.1"/>
</dbReference>
<dbReference type="SMR" id="B7HED2"/>
<dbReference type="KEGG" id="bcb:BCB4264_A5249"/>
<dbReference type="HOGENOM" id="CLU_031223_2_1_9"/>
<dbReference type="UniPathway" id="UPA00109">
    <property type="reaction ID" value="UER00187"/>
</dbReference>
<dbReference type="Proteomes" id="UP000007096">
    <property type="component" value="Chromosome"/>
</dbReference>
<dbReference type="GO" id="GO:0009986">
    <property type="term" value="C:cell surface"/>
    <property type="evidence" value="ECO:0007669"/>
    <property type="project" value="UniProtKB-SubCell"/>
</dbReference>
<dbReference type="GO" id="GO:0005576">
    <property type="term" value="C:extracellular region"/>
    <property type="evidence" value="ECO:0007669"/>
    <property type="project" value="UniProtKB-SubCell"/>
</dbReference>
<dbReference type="GO" id="GO:0000015">
    <property type="term" value="C:phosphopyruvate hydratase complex"/>
    <property type="evidence" value="ECO:0007669"/>
    <property type="project" value="InterPro"/>
</dbReference>
<dbReference type="GO" id="GO:0000287">
    <property type="term" value="F:magnesium ion binding"/>
    <property type="evidence" value="ECO:0007669"/>
    <property type="project" value="UniProtKB-UniRule"/>
</dbReference>
<dbReference type="GO" id="GO:0004634">
    <property type="term" value="F:phosphopyruvate hydratase activity"/>
    <property type="evidence" value="ECO:0007669"/>
    <property type="project" value="UniProtKB-UniRule"/>
</dbReference>
<dbReference type="GO" id="GO:0006096">
    <property type="term" value="P:glycolytic process"/>
    <property type="evidence" value="ECO:0007669"/>
    <property type="project" value="UniProtKB-UniRule"/>
</dbReference>
<dbReference type="CDD" id="cd03313">
    <property type="entry name" value="enolase"/>
    <property type="match status" value="1"/>
</dbReference>
<dbReference type="FunFam" id="3.20.20.120:FF:000001">
    <property type="entry name" value="Enolase"/>
    <property type="match status" value="1"/>
</dbReference>
<dbReference type="FunFam" id="3.30.390.10:FF:000001">
    <property type="entry name" value="Enolase"/>
    <property type="match status" value="1"/>
</dbReference>
<dbReference type="Gene3D" id="3.20.20.120">
    <property type="entry name" value="Enolase-like C-terminal domain"/>
    <property type="match status" value="1"/>
</dbReference>
<dbReference type="Gene3D" id="3.30.390.10">
    <property type="entry name" value="Enolase-like, N-terminal domain"/>
    <property type="match status" value="1"/>
</dbReference>
<dbReference type="HAMAP" id="MF_00318">
    <property type="entry name" value="Enolase"/>
    <property type="match status" value="1"/>
</dbReference>
<dbReference type="InterPro" id="IPR000941">
    <property type="entry name" value="Enolase"/>
</dbReference>
<dbReference type="InterPro" id="IPR036849">
    <property type="entry name" value="Enolase-like_C_sf"/>
</dbReference>
<dbReference type="InterPro" id="IPR029017">
    <property type="entry name" value="Enolase-like_N"/>
</dbReference>
<dbReference type="InterPro" id="IPR020810">
    <property type="entry name" value="Enolase_C"/>
</dbReference>
<dbReference type="InterPro" id="IPR020809">
    <property type="entry name" value="Enolase_CS"/>
</dbReference>
<dbReference type="InterPro" id="IPR020811">
    <property type="entry name" value="Enolase_N"/>
</dbReference>
<dbReference type="NCBIfam" id="TIGR01060">
    <property type="entry name" value="eno"/>
    <property type="match status" value="1"/>
</dbReference>
<dbReference type="PANTHER" id="PTHR11902">
    <property type="entry name" value="ENOLASE"/>
    <property type="match status" value="1"/>
</dbReference>
<dbReference type="PANTHER" id="PTHR11902:SF1">
    <property type="entry name" value="ENOLASE"/>
    <property type="match status" value="1"/>
</dbReference>
<dbReference type="Pfam" id="PF00113">
    <property type="entry name" value="Enolase_C"/>
    <property type="match status" value="1"/>
</dbReference>
<dbReference type="Pfam" id="PF03952">
    <property type="entry name" value="Enolase_N"/>
    <property type="match status" value="1"/>
</dbReference>
<dbReference type="PIRSF" id="PIRSF001400">
    <property type="entry name" value="Enolase"/>
    <property type="match status" value="1"/>
</dbReference>
<dbReference type="PRINTS" id="PR00148">
    <property type="entry name" value="ENOLASE"/>
</dbReference>
<dbReference type="SFLD" id="SFLDF00002">
    <property type="entry name" value="enolase"/>
    <property type="match status" value="1"/>
</dbReference>
<dbReference type="SFLD" id="SFLDG00178">
    <property type="entry name" value="enolase"/>
    <property type="match status" value="1"/>
</dbReference>
<dbReference type="SMART" id="SM01192">
    <property type="entry name" value="Enolase_C"/>
    <property type="match status" value="1"/>
</dbReference>
<dbReference type="SMART" id="SM01193">
    <property type="entry name" value="Enolase_N"/>
    <property type="match status" value="1"/>
</dbReference>
<dbReference type="SUPFAM" id="SSF51604">
    <property type="entry name" value="Enolase C-terminal domain-like"/>
    <property type="match status" value="1"/>
</dbReference>
<dbReference type="SUPFAM" id="SSF54826">
    <property type="entry name" value="Enolase N-terminal domain-like"/>
    <property type="match status" value="1"/>
</dbReference>
<dbReference type="PROSITE" id="PS00164">
    <property type="entry name" value="ENOLASE"/>
    <property type="match status" value="1"/>
</dbReference>
<comment type="function">
    <text evidence="1">Catalyzes the reversible conversion of 2-phosphoglycerate (2-PG) into phosphoenolpyruvate (PEP). It is essential for the degradation of carbohydrates via glycolysis.</text>
</comment>
<comment type="catalytic activity">
    <reaction evidence="1">
        <text>(2R)-2-phosphoglycerate = phosphoenolpyruvate + H2O</text>
        <dbReference type="Rhea" id="RHEA:10164"/>
        <dbReference type="ChEBI" id="CHEBI:15377"/>
        <dbReference type="ChEBI" id="CHEBI:58289"/>
        <dbReference type="ChEBI" id="CHEBI:58702"/>
        <dbReference type="EC" id="4.2.1.11"/>
    </reaction>
</comment>
<comment type="cofactor">
    <cofactor evidence="1">
        <name>Mg(2+)</name>
        <dbReference type="ChEBI" id="CHEBI:18420"/>
    </cofactor>
    <text evidence="1">Binds a second Mg(2+) ion via substrate during catalysis.</text>
</comment>
<comment type="pathway">
    <text evidence="1">Carbohydrate degradation; glycolysis; pyruvate from D-glyceraldehyde 3-phosphate: step 4/5.</text>
</comment>
<comment type="subcellular location">
    <subcellularLocation>
        <location evidence="1">Cytoplasm</location>
    </subcellularLocation>
    <subcellularLocation>
        <location evidence="1">Secreted</location>
    </subcellularLocation>
    <subcellularLocation>
        <location evidence="1">Cell surface</location>
    </subcellularLocation>
    <text evidence="1">Fractions of enolase are present in both the cytoplasm and on the cell surface.</text>
</comment>
<comment type="similarity">
    <text evidence="1">Belongs to the enolase family.</text>
</comment>
<reference key="1">
    <citation type="submission" date="2008-10" db="EMBL/GenBank/DDBJ databases">
        <title>Genome sequence of Bacillus cereus B4264.</title>
        <authorList>
            <person name="Dodson R.J."/>
            <person name="Durkin A.S."/>
            <person name="Rosovitz M.J."/>
            <person name="Rasko D.A."/>
            <person name="Hoffmaster A."/>
            <person name="Ravel J."/>
            <person name="Sutton G."/>
        </authorList>
    </citation>
    <scope>NUCLEOTIDE SEQUENCE [LARGE SCALE GENOMIC DNA]</scope>
    <source>
        <strain>B4264</strain>
    </source>
</reference>
<name>ENO_BACC4</name>
<gene>
    <name evidence="1" type="primary">eno</name>
    <name type="ordered locus">BCB4264_A5249</name>
</gene>
<evidence type="ECO:0000255" key="1">
    <source>
        <dbReference type="HAMAP-Rule" id="MF_00318"/>
    </source>
</evidence>
<sequence>MSTIIDVYAREVLDSRGNPTVEVEVYTESGAFGRAIVPSGASTGEHEAVELRDGDKSRYLGKGVVNAVNNVNEIIAPEIAGFDVTDQAGIDRAMIELDGTPNKGKLGANAILGVSMAVAHAAADFVGLPLYRYLGGFNAKQLPTPMMNIINGGSHADNNVDFQEFMILPVGAPTFKESIRMGAEVFHALKAVLHDKGLNTAVGDEGGFAPNLGSNREALEVIIEAIEKAGYKAGENVFLGMDVASSEFYNKETGKYDLAGEGRTGLTSAEMVDFYEELCKDFPIISIEDGLDENDWDGHKLLTERIGDKVQLVGDDLFVTNTQKLAEGIEKGISNSILIKVNQIGTLTETFEAIEMAKRAGYTAVVSHRSGETEDATIADIAVATNAGQIKTGSMSRTDRIAKYNQLLRIEDELGEVAVYDGVKSFYNIKR</sequence>
<proteinExistence type="inferred from homology"/>